<protein>
    <recommendedName>
        <fullName>UPF0125 protein XF_2346</fullName>
    </recommendedName>
</protein>
<proteinExistence type="inferred from homology"/>
<feature type="chain" id="PRO_0000192506" description="UPF0125 protein XF_2346">
    <location>
        <begin position="1"/>
        <end position="80"/>
    </location>
</feature>
<comment type="similarity">
    <text evidence="1">Belongs to the UPF0125 (RnfH) family.</text>
</comment>
<organism>
    <name type="scientific">Xylella fastidiosa (strain 9a5c)</name>
    <dbReference type="NCBI Taxonomy" id="160492"/>
    <lineage>
        <taxon>Bacteria</taxon>
        <taxon>Pseudomonadati</taxon>
        <taxon>Pseudomonadota</taxon>
        <taxon>Gammaproteobacteria</taxon>
        <taxon>Lysobacterales</taxon>
        <taxon>Lysobacteraceae</taxon>
        <taxon>Xylella</taxon>
    </lineage>
</organism>
<reference key="1">
    <citation type="journal article" date="2000" name="Nature">
        <title>The genome sequence of the plant pathogen Xylella fastidiosa.</title>
        <authorList>
            <person name="Simpson A.J.G."/>
            <person name="Reinach F.C."/>
            <person name="Arruda P."/>
            <person name="Abreu F.A."/>
            <person name="Acencio M."/>
            <person name="Alvarenga R."/>
            <person name="Alves L.M.C."/>
            <person name="Araya J.E."/>
            <person name="Baia G.S."/>
            <person name="Baptista C.S."/>
            <person name="Barros M.H."/>
            <person name="Bonaccorsi E.D."/>
            <person name="Bordin S."/>
            <person name="Bove J.M."/>
            <person name="Briones M.R.S."/>
            <person name="Bueno M.R.P."/>
            <person name="Camargo A.A."/>
            <person name="Camargo L.E.A."/>
            <person name="Carraro D.M."/>
            <person name="Carrer H."/>
            <person name="Colauto N.B."/>
            <person name="Colombo C."/>
            <person name="Costa F.F."/>
            <person name="Costa M.C.R."/>
            <person name="Costa-Neto C.M."/>
            <person name="Coutinho L.L."/>
            <person name="Cristofani M."/>
            <person name="Dias-Neto E."/>
            <person name="Docena C."/>
            <person name="El-Dorry H."/>
            <person name="Facincani A.P."/>
            <person name="Ferreira A.J.S."/>
            <person name="Ferreira V.C.A."/>
            <person name="Ferro J.A."/>
            <person name="Fraga J.S."/>
            <person name="Franca S.C."/>
            <person name="Franco M.C."/>
            <person name="Frohme M."/>
            <person name="Furlan L.R."/>
            <person name="Garnier M."/>
            <person name="Goldman G.H."/>
            <person name="Goldman M.H.S."/>
            <person name="Gomes S.L."/>
            <person name="Gruber A."/>
            <person name="Ho P.L."/>
            <person name="Hoheisel J.D."/>
            <person name="Junqueira M.L."/>
            <person name="Kemper E.L."/>
            <person name="Kitajima J.P."/>
            <person name="Krieger J.E."/>
            <person name="Kuramae E.E."/>
            <person name="Laigret F."/>
            <person name="Lambais M.R."/>
            <person name="Leite L.C.C."/>
            <person name="Lemos E.G.M."/>
            <person name="Lemos M.V.F."/>
            <person name="Lopes S.A."/>
            <person name="Lopes C.R."/>
            <person name="Machado J.A."/>
            <person name="Machado M.A."/>
            <person name="Madeira A.M.B.N."/>
            <person name="Madeira H.M.F."/>
            <person name="Marino C.L."/>
            <person name="Marques M.V."/>
            <person name="Martins E.A.L."/>
            <person name="Martins E.M.F."/>
            <person name="Matsukuma A.Y."/>
            <person name="Menck C.F.M."/>
            <person name="Miracca E.C."/>
            <person name="Miyaki C.Y."/>
            <person name="Monteiro-Vitorello C.B."/>
            <person name="Moon D.H."/>
            <person name="Nagai M.A."/>
            <person name="Nascimento A.L.T.O."/>
            <person name="Netto L.E.S."/>
            <person name="Nhani A. Jr."/>
            <person name="Nobrega F.G."/>
            <person name="Nunes L.R."/>
            <person name="Oliveira M.A."/>
            <person name="de Oliveira M.C."/>
            <person name="de Oliveira R.C."/>
            <person name="Palmieri D.A."/>
            <person name="Paris A."/>
            <person name="Peixoto B.R."/>
            <person name="Pereira G.A.G."/>
            <person name="Pereira H.A. Jr."/>
            <person name="Pesquero J.B."/>
            <person name="Quaggio R.B."/>
            <person name="Roberto P.G."/>
            <person name="Rodrigues V."/>
            <person name="de Rosa A.J.M."/>
            <person name="de Rosa V.E. Jr."/>
            <person name="de Sa R.G."/>
            <person name="Santelli R.V."/>
            <person name="Sawasaki H.E."/>
            <person name="da Silva A.C.R."/>
            <person name="da Silva A.M."/>
            <person name="da Silva F.R."/>
            <person name="Silva W.A. Jr."/>
            <person name="da Silveira J.F."/>
            <person name="Silvestri M.L.Z."/>
            <person name="Siqueira W.J."/>
            <person name="de Souza A.A."/>
            <person name="de Souza A.P."/>
            <person name="Terenzi M.F."/>
            <person name="Truffi D."/>
            <person name="Tsai S.M."/>
            <person name="Tsuhako M.H."/>
            <person name="Vallada H."/>
            <person name="Van Sluys M.A."/>
            <person name="Verjovski-Almeida S."/>
            <person name="Vettore A.L."/>
            <person name="Zago M.A."/>
            <person name="Zatz M."/>
            <person name="Meidanis J."/>
            <person name="Setubal J.C."/>
        </authorList>
    </citation>
    <scope>NUCLEOTIDE SEQUENCE [LARGE SCALE GENOMIC DNA]</scope>
    <source>
        <strain>9a5c</strain>
    </source>
</reference>
<accession>Q9PAZ9</accession>
<name>Y2346_XYLFA</name>
<evidence type="ECO:0000305" key="1"/>
<gene>
    <name type="ordered locus">XF_2346</name>
</gene>
<sequence>MLIAWPDRVHCCEIMLQEGARVVDAVEMAALNGIEQAVGYAVFGVLVTSDHVLNEGDRVELLRPLLIDPKEARRRRAVSA</sequence>
<dbReference type="EMBL" id="AE003849">
    <property type="protein sequence ID" value="AAF85145.1"/>
    <property type="molecule type" value="Genomic_DNA"/>
</dbReference>
<dbReference type="PIR" id="A82568">
    <property type="entry name" value="A82568"/>
</dbReference>
<dbReference type="SMR" id="Q9PAZ9"/>
<dbReference type="STRING" id="160492.XF_2346"/>
<dbReference type="KEGG" id="xfa:XF_2346"/>
<dbReference type="eggNOG" id="COG2914">
    <property type="taxonomic scope" value="Bacteria"/>
</dbReference>
<dbReference type="HOGENOM" id="CLU_150721_0_1_6"/>
<dbReference type="Proteomes" id="UP000000812">
    <property type="component" value="Chromosome"/>
</dbReference>
<dbReference type="Gene3D" id="3.10.20.280">
    <property type="entry name" value="RnfH-like"/>
    <property type="match status" value="1"/>
</dbReference>
<dbReference type="HAMAP" id="MF_00460">
    <property type="entry name" value="UPF0125_RnfH"/>
    <property type="match status" value="1"/>
</dbReference>
<dbReference type="InterPro" id="IPR016155">
    <property type="entry name" value="Mopterin_synth/thiamin_S_b"/>
</dbReference>
<dbReference type="InterPro" id="IPR005346">
    <property type="entry name" value="RnfH"/>
</dbReference>
<dbReference type="InterPro" id="IPR037021">
    <property type="entry name" value="RnfH_sf"/>
</dbReference>
<dbReference type="NCBIfam" id="NF002490">
    <property type="entry name" value="PRK01777.1"/>
    <property type="match status" value="1"/>
</dbReference>
<dbReference type="PANTHER" id="PTHR37483">
    <property type="entry name" value="UPF0125 PROTEIN RATB"/>
    <property type="match status" value="1"/>
</dbReference>
<dbReference type="PANTHER" id="PTHR37483:SF1">
    <property type="entry name" value="UPF0125 PROTEIN RATB"/>
    <property type="match status" value="1"/>
</dbReference>
<dbReference type="Pfam" id="PF03658">
    <property type="entry name" value="Ub-RnfH"/>
    <property type="match status" value="1"/>
</dbReference>
<dbReference type="SUPFAM" id="SSF54285">
    <property type="entry name" value="MoaD/ThiS"/>
    <property type="match status" value="1"/>
</dbReference>